<dbReference type="EC" id="6.3.4.5" evidence="1"/>
<dbReference type="EMBL" id="CP000463">
    <property type="protein sequence ID" value="ABJ03995.1"/>
    <property type="molecule type" value="Genomic_DNA"/>
</dbReference>
<dbReference type="SMR" id="Q07VN9"/>
<dbReference type="STRING" id="316055.RPE_0034"/>
<dbReference type="KEGG" id="rpe:RPE_0034"/>
<dbReference type="eggNOG" id="COG0137">
    <property type="taxonomic scope" value="Bacteria"/>
</dbReference>
<dbReference type="HOGENOM" id="CLU_032784_4_1_5"/>
<dbReference type="OrthoDB" id="9801641at2"/>
<dbReference type="UniPathway" id="UPA00068">
    <property type="reaction ID" value="UER00113"/>
</dbReference>
<dbReference type="GO" id="GO:0005737">
    <property type="term" value="C:cytoplasm"/>
    <property type="evidence" value="ECO:0007669"/>
    <property type="project" value="UniProtKB-SubCell"/>
</dbReference>
<dbReference type="GO" id="GO:0004055">
    <property type="term" value="F:argininosuccinate synthase activity"/>
    <property type="evidence" value="ECO:0007669"/>
    <property type="project" value="UniProtKB-UniRule"/>
</dbReference>
<dbReference type="GO" id="GO:0005524">
    <property type="term" value="F:ATP binding"/>
    <property type="evidence" value="ECO:0007669"/>
    <property type="project" value="UniProtKB-UniRule"/>
</dbReference>
<dbReference type="GO" id="GO:0042803">
    <property type="term" value="F:protein homodimerization activity"/>
    <property type="evidence" value="ECO:0007669"/>
    <property type="project" value="InterPro"/>
</dbReference>
<dbReference type="GO" id="GO:0000053">
    <property type="term" value="P:argininosuccinate metabolic process"/>
    <property type="evidence" value="ECO:0007669"/>
    <property type="project" value="TreeGrafter"/>
</dbReference>
<dbReference type="GO" id="GO:0006526">
    <property type="term" value="P:L-arginine biosynthetic process"/>
    <property type="evidence" value="ECO:0007669"/>
    <property type="project" value="UniProtKB-UniRule"/>
</dbReference>
<dbReference type="GO" id="GO:0000050">
    <property type="term" value="P:urea cycle"/>
    <property type="evidence" value="ECO:0007669"/>
    <property type="project" value="TreeGrafter"/>
</dbReference>
<dbReference type="CDD" id="cd01999">
    <property type="entry name" value="ASS"/>
    <property type="match status" value="1"/>
</dbReference>
<dbReference type="FunFam" id="1.10.287.400:FF:000001">
    <property type="entry name" value="Argininosuccinate synthase"/>
    <property type="match status" value="1"/>
</dbReference>
<dbReference type="Gene3D" id="1.10.287.400">
    <property type="match status" value="1"/>
</dbReference>
<dbReference type="Gene3D" id="3.90.1260.10">
    <property type="entry name" value="Argininosuccinate synthetase, chain A, domain 2"/>
    <property type="match status" value="1"/>
</dbReference>
<dbReference type="Gene3D" id="3.40.50.620">
    <property type="entry name" value="HUPs"/>
    <property type="match status" value="1"/>
</dbReference>
<dbReference type="HAMAP" id="MF_00581">
    <property type="entry name" value="Arg_succ_synth_type2"/>
    <property type="match status" value="1"/>
</dbReference>
<dbReference type="InterPro" id="IPR023437">
    <property type="entry name" value="Arg_succ_synth_type2_subfam"/>
</dbReference>
<dbReference type="InterPro" id="IPR048268">
    <property type="entry name" value="Arginosuc_syn_C"/>
</dbReference>
<dbReference type="InterPro" id="IPR048267">
    <property type="entry name" value="Arginosuc_syn_N"/>
</dbReference>
<dbReference type="InterPro" id="IPR001518">
    <property type="entry name" value="Arginosuc_synth"/>
</dbReference>
<dbReference type="InterPro" id="IPR018223">
    <property type="entry name" value="Arginosuc_synth_CS"/>
</dbReference>
<dbReference type="InterPro" id="IPR023434">
    <property type="entry name" value="Arginosuc_synth_type_1_subfam"/>
</dbReference>
<dbReference type="InterPro" id="IPR024074">
    <property type="entry name" value="AS_cat/multimer_dom_body"/>
</dbReference>
<dbReference type="InterPro" id="IPR024073">
    <property type="entry name" value="AS_multimer_C_tail"/>
</dbReference>
<dbReference type="InterPro" id="IPR014729">
    <property type="entry name" value="Rossmann-like_a/b/a_fold"/>
</dbReference>
<dbReference type="NCBIfam" id="TIGR00032">
    <property type="entry name" value="argG"/>
    <property type="match status" value="1"/>
</dbReference>
<dbReference type="NCBIfam" id="NF003779">
    <property type="entry name" value="PRK05370.1"/>
    <property type="match status" value="1"/>
</dbReference>
<dbReference type="PANTHER" id="PTHR11587">
    <property type="entry name" value="ARGININOSUCCINATE SYNTHASE"/>
    <property type="match status" value="1"/>
</dbReference>
<dbReference type="PANTHER" id="PTHR11587:SF2">
    <property type="entry name" value="ARGININOSUCCINATE SYNTHASE"/>
    <property type="match status" value="1"/>
</dbReference>
<dbReference type="Pfam" id="PF20979">
    <property type="entry name" value="Arginosuc_syn_C"/>
    <property type="match status" value="1"/>
</dbReference>
<dbReference type="Pfam" id="PF00764">
    <property type="entry name" value="Arginosuc_synth"/>
    <property type="match status" value="1"/>
</dbReference>
<dbReference type="SUPFAM" id="SSF52402">
    <property type="entry name" value="Adenine nucleotide alpha hydrolases-like"/>
    <property type="match status" value="1"/>
</dbReference>
<dbReference type="SUPFAM" id="SSF69864">
    <property type="entry name" value="Argininosuccinate synthetase, C-terminal domain"/>
    <property type="match status" value="1"/>
</dbReference>
<dbReference type="PROSITE" id="PS00564">
    <property type="entry name" value="ARGININOSUCCIN_SYN_1"/>
    <property type="match status" value="1"/>
</dbReference>
<dbReference type="PROSITE" id="PS00565">
    <property type="entry name" value="ARGININOSUCCIN_SYN_2"/>
    <property type="match status" value="1"/>
</dbReference>
<proteinExistence type="inferred from homology"/>
<accession>Q07VN9</accession>
<comment type="catalytic activity">
    <reaction evidence="1">
        <text>L-citrulline + L-aspartate + ATP = 2-(N(omega)-L-arginino)succinate + AMP + diphosphate + H(+)</text>
        <dbReference type="Rhea" id="RHEA:10932"/>
        <dbReference type="ChEBI" id="CHEBI:15378"/>
        <dbReference type="ChEBI" id="CHEBI:29991"/>
        <dbReference type="ChEBI" id="CHEBI:30616"/>
        <dbReference type="ChEBI" id="CHEBI:33019"/>
        <dbReference type="ChEBI" id="CHEBI:57472"/>
        <dbReference type="ChEBI" id="CHEBI:57743"/>
        <dbReference type="ChEBI" id="CHEBI:456215"/>
        <dbReference type="EC" id="6.3.4.5"/>
    </reaction>
</comment>
<comment type="pathway">
    <text evidence="1">Amino-acid biosynthesis; L-arginine biosynthesis; L-arginine from L-ornithine and carbamoyl phosphate: step 2/3.</text>
</comment>
<comment type="subunit">
    <text evidence="1">Homotetramer.</text>
</comment>
<comment type="subcellular location">
    <subcellularLocation>
        <location evidence="1">Cytoplasm</location>
    </subcellularLocation>
</comment>
<comment type="similarity">
    <text evidence="1">Belongs to the argininosuccinate synthase family. Type 2 subfamily.</text>
</comment>
<gene>
    <name evidence="1" type="primary">argG</name>
    <name type="ordered locus">RPE_0034</name>
</gene>
<organism>
    <name type="scientific">Rhodopseudomonas palustris (strain BisA53)</name>
    <dbReference type="NCBI Taxonomy" id="316055"/>
    <lineage>
        <taxon>Bacteria</taxon>
        <taxon>Pseudomonadati</taxon>
        <taxon>Pseudomonadota</taxon>
        <taxon>Alphaproteobacteria</taxon>
        <taxon>Hyphomicrobiales</taxon>
        <taxon>Nitrobacteraceae</taxon>
        <taxon>Rhodopseudomonas</taxon>
    </lineage>
</organism>
<sequence>MSTILKSLPQGENVGIAFSGGLDTSAALLWMKQKGARVFAYTANLGQPDEADYDEIPRKAMEFGAEKARLVDCRSQLVHEGIAAIQAGAFHVSTGGIAYFNTTPLGRAVTGTMLVSAMKEDGVNIWGDGSTYKGNDIERFYRYGLLTNPDLRIYKPWLDQQFIDELGGRAEMSAFMTAAGFAYKMSSEKAYSTDSNLLGATHEAKDLERLDSGIKIVNPIMGVPFWRDDCAVKAETVAVRFVDGQPVALNGQTFADPVALFLEANAIGGRHGLGMSDQIENRIIEAKSRGIYEAPGMALLHIAYERLVTGIHNEDTIEQYRISGMRLGRLLYQGRWFDSQALMLRETAQRWVARAITGEVTLELRRGNDYSILNTESPNLTYAPERLSMEKVEDAPFTPADRIGQLTMRNLDITDTRAKLDIFAKAGLLSAGEGSHIPKLESDKG</sequence>
<name>ASSY_RHOP5</name>
<protein>
    <recommendedName>
        <fullName evidence="1">Argininosuccinate synthase</fullName>
        <ecNumber evidence="1">6.3.4.5</ecNumber>
    </recommendedName>
    <alternativeName>
        <fullName evidence="1">Citrulline--aspartate ligase</fullName>
    </alternativeName>
</protein>
<keyword id="KW-0028">Amino-acid biosynthesis</keyword>
<keyword id="KW-0055">Arginine biosynthesis</keyword>
<keyword id="KW-0067">ATP-binding</keyword>
<keyword id="KW-0963">Cytoplasm</keyword>
<keyword id="KW-0436">Ligase</keyword>
<keyword id="KW-0547">Nucleotide-binding</keyword>
<reference key="1">
    <citation type="submission" date="2006-09" db="EMBL/GenBank/DDBJ databases">
        <title>Complete sequence of Rhodopseudomonas palustris BisA53.</title>
        <authorList>
            <consortium name="US DOE Joint Genome Institute"/>
            <person name="Copeland A."/>
            <person name="Lucas S."/>
            <person name="Lapidus A."/>
            <person name="Barry K."/>
            <person name="Detter J.C."/>
            <person name="Glavina del Rio T."/>
            <person name="Hammon N."/>
            <person name="Israni S."/>
            <person name="Dalin E."/>
            <person name="Tice H."/>
            <person name="Pitluck S."/>
            <person name="Chain P."/>
            <person name="Malfatti S."/>
            <person name="Shin M."/>
            <person name="Vergez L."/>
            <person name="Schmutz J."/>
            <person name="Larimer F."/>
            <person name="Land M."/>
            <person name="Hauser L."/>
            <person name="Pelletier D.A."/>
            <person name="Kyrpides N."/>
            <person name="Kim E."/>
            <person name="Harwood C.S."/>
            <person name="Oda Y."/>
            <person name="Richardson P."/>
        </authorList>
    </citation>
    <scope>NUCLEOTIDE SEQUENCE [LARGE SCALE GENOMIC DNA]</scope>
    <source>
        <strain>BisA53</strain>
    </source>
</reference>
<evidence type="ECO:0000255" key="1">
    <source>
        <dbReference type="HAMAP-Rule" id="MF_00581"/>
    </source>
</evidence>
<feature type="chain" id="PRO_1000129761" description="Argininosuccinate synthase">
    <location>
        <begin position="1"/>
        <end position="445"/>
    </location>
</feature>
<feature type="binding site" evidence="1">
    <location>
        <begin position="17"/>
        <end position="25"/>
    </location>
    <ligand>
        <name>ATP</name>
        <dbReference type="ChEBI" id="CHEBI:30616"/>
    </ligand>
</feature>
<feature type="binding site" evidence="1">
    <location>
        <position position="43"/>
    </location>
    <ligand>
        <name>ATP</name>
        <dbReference type="ChEBI" id="CHEBI:30616"/>
    </ligand>
</feature>
<feature type="binding site" evidence="1">
    <location>
        <position position="99"/>
    </location>
    <ligand>
        <name>L-citrulline</name>
        <dbReference type="ChEBI" id="CHEBI:57743"/>
    </ligand>
</feature>
<feature type="binding site" evidence="1">
    <location>
        <position position="129"/>
    </location>
    <ligand>
        <name>ATP</name>
        <dbReference type="ChEBI" id="CHEBI:30616"/>
    </ligand>
</feature>
<feature type="binding site" evidence="1">
    <location>
        <position position="131"/>
    </location>
    <ligand>
        <name>ATP</name>
        <dbReference type="ChEBI" id="CHEBI:30616"/>
    </ligand>
</feature>
<feature type="binding site" evidence="1">
    <location>
        <position position="131"/>
    </location>
    <ligand>
        <name>L-aspartate</name>
        <dbReference type="ChEBI" id="CHEBI:29991"/>
    </ligand>
</feature>
<feature type="binding site" evidence="1">
    <location>
        <position position="135"/>
    </location>
    <ligand>
        <name>L-aspartate</name>
        <dbReference type="ChEBI" id="CHEBI:29991"/>
    </ligand>
</feature>
<feature type="binding site" evidence="1">
    <location>
        <position position="135"/>
    </location>
    <ligand>
        <name>L-citrulline</name>
        <dbReference type="ChEBI" id="CHEBI:57743"/>
    </ligand>
</feature>
<feature type="binding site" evidence="1">
    <location>
        <position position="136"/>
    </location>
    <ligand>
        <name>ATP</name>
        <dbReference type="ChEBI" id="CHEBI:30616"/>
    </ligand>
</feature>
<feature type="binding site" evidence="1">
    <location>
        <position position="136"/>
    </location>
    <ligand>
        <name>L-aspartate</name>
        <dbReference type="ChEBI" id="CHEBI:29991"/>
    </ligand>
</feature>
<feature type="binding site" evidence="1">
    <location>
        <position position="139"/>
    </location>
    <ligand>
        <name>L-citrulline</name>
        <dbReference type="ChEBI" id="CHEBI:57743"/>
    </ligand>
</feature>
<feature type="binding site" evidence="1">
    <location>
        <position position="192"/>
    </location>
    <ligand>
        <name>L-citrulline</name>
        <dbReference type="ChEBI" id="CHEBI:57743"/>
    </ligand>
</feature>
<feature type="binding site" evidence="1">
    <location>
        <position position="194"/>
    </location>
    <ligand>
        <name>ATP</name>
        <dbReference type="ChEBI" id="CHEBI:30616"/>
    </ligand>
</feature>
<feature type="binding site" evidence="1">
    <location>
        <position position="201"/>
    </location>
    <ligand>
        <name>L-citrulline</name>
        <dbReference type="ChEBI" id="CHEBI:57743"/>
    </ligand>
</feature>
<feature type="binding site" evidence="1">
    <location>
        <position position="203"/>
    </location>
    <ligand>
        <name>L-citrulline</name>
        <dbReference type="ChEBI" id="CHEBI:57743"/>
    </ligand>
</feature>
<feature type="binding site" evidence="1">
    <location>
        <position position="280"/>
    </location>
    <ligand>
        <name>L-citrulline</name>
        <dbReference type="ChEBI" id="CHEBI:57743"/>
    </ligand>
</feature>